<proteinExistence type="evidence at protein level"/>
<evidence type="ECO:0000250" key="1">
    <source>
        <dbReference type="UniProtKB" id="P42765"/>
    </source>
</evidence>
<evidence type="ECO:0000250" key="2">
    <source>
        <dbReference type="UniProtKB" id="Q8BWT1"/>
    </source>
</evidence>
<evidence type="ECO:0000255" key="3">
    <source>
        <dbReference type="PROSITE-ProRule" id="PRU10020"/>
    </source>
</evidence>
<evidence type="ECO:0000269" key="4">
    <source>
    </source>
</evidence>
<evidence type="ECO:0000305" key="5"/>
<evidence type="ECO:0000305" key="6">
    <source>
    </source>
</evidence>
<dbReference type="EC" id="2.3.1.16" evidence="4"/>
<dbReference type="EC" id="2.3.1.9" evidence="4"/>
<dbReference type="EC" id="3.1.2.-" evidence="4"/>
<dbReference type="EC" id="3.1.2.1" evidence="4"/>
<dbReference type="EC" id="3.1.2.2" evidence="4"/>
<dbReference type="EMBL" id="X05341">
    <property type="protein sequence ID" value="CAA28952.1"/>
    <property type="molecule type" value="mRNA"/>
</dbReference>
<dbReference type="PIR" id="A29452">
    <property type="entry name" value="XURT"/>
</dbReference>
<dbReference type="RefSeq" id="NP_569117.1">
    <property type="nucleotide sequence ID" value="NM_130433.1"/>
</dbReference>
<dbReference type="SMR" id="P13437"/>
<dbReference type="BioGRID" id="250910">
    <property type="interactions" value="3"/>
</dbReference>
<dbReference type="FunCoup" id="P13437">
    <property type="interactions" value="1358"/>
</dbReference>
<dbReference type="IntAct" id="P13437">
    <property type="interactions" value="2"/>
</dbReference>
<dbReference type="STRING" id="10116.ENSRNOP00000060140"/>
<dbReference type="SwissLipids" id="SLP:000001412"/>
<dbReference type="CarbonylDB" id="P13437"/>
<dbReference type="GlyGen" id="P13437">
    <property type="glycosylation" value="3 sites, 1 O-linked glycan (3 sites)"/>
</dbReference>
<dbReference type="iPTMnet" id="P13437"/>
<dbReference type="PhosphoSitePlus" id="P13437"/>
<dbReference type="SwissPalm" id="P13437"/>
<dbReference type="jPOST" id="P13437"/>
<dbReference type="PaxDb" id="10116-ENSRNOP00000060140"/>
<dbReference type="GeneID" id="170465"/>
<dbReference type="KEGG" id="rno:170465"/>
<dbReference type="AGR" id="RGD:620482"/>
<dbReference type="CTD" id="10449"/>
<dbReference type="RGD" id="620482">
    <property type="gene designation" value="Acaa2"/>
</dbReference>
<dbReference type="eggNOG" id="KOG1391">
    <property type="taxonomic scope" value="Eukaryota"/>
</dbReference>
<dbReference type="InParanoid" id="P13437"/>
<dbReference type="PhylomeDB" id="P13437"/>
<dbReference type="Reactome" id="R-RNO-77289">
    <property type="pathway name" value="Mitochondrial Fatty Acid Beta-Oxidation"/>
</dbReference>
<dbReference type="SABIO-RK" id="P13437"/>
<dbReference type="UniPathway" id="UPA00659"/>
<dbReference type="PRO" id="PR:P13437"/>
<dbReference type="Proteomes" id="UP000002494">
    <property type="component" value="Unplaced"/>
</dbReference>
<dbReference type="GO" id="GO:0005759">
    <property type="term" value="C:mitochondrial matrix"/>
    <property type="evidence" value="ECO:0000314"/>
    <property type="project" value="RGD"/>
</dbReference>
<dbReference type="GO" id="GO:0005739">
    <property type="term" value="C:mitochondrion"/>
    <property type="evidence" value="ECO:0000318"/>
    <property type="project" value="GO_Central"/>
</dbReference>
<dbReference type="GO" id="GO:0003985">
    <property type="term" value="F:acetyl-CoA C-acetyltransferase activity"/>
    <property type="evidence" value="ECO:0000266"/>
    <property type="project" value="RGD"/>
</dbReference>
<dbReference type="GO" id="GO:0003988">
    <property type="term" value="F:acetyl-CoA C-acyltransferase activity"/>
    <property type="evidence" value="ECO:0000314"/>
    <property type="project" value="RGD"/>
</dbReference>
<dbReference type="GO" id="GO:0003986">
    <property type="term" value="F:acetyl-CoA hydrolase activity"/>
    <property type="evidence" value="ECO:0007669"/>
    <property type="project" value="UniProtKB-EC"/>
</dbReference>
<dbReference type="GO" id="GO:0047617">
    <property type="term" value="F:fatty acyl-CoA hydrolase activity"/>
    <property type="evidence" value="ECO:0000314"/>
    <property type="project" value="UniProtKB"/>
</dbReference>
<dbReference type="GO" id="GO:0006084">
    <property type="term" value="P:acetyl-CoA metabolic process"/>
    <property type="evidence" value="ECO:0000314"/>
    <property type="project" value="RGD"/>
</dbReference>
<dbReference type="GO" id="GO:0071456">
    <property type="term" value="P:cellular response to hypoxia"/>
    <property type="evidence" value="ECO:0000266"/>
    <property type="project" value="RGD"/>
</dbReference>
<dbReference type="GO" id="GO:0006635">
    <property type="term" value="P:fatty acid beta-oxidation"/>
    <property type="evidence" value="ECO:0000314"/>
    <property type="project" value="RGD"/>
</dbReference>
<dbReference type="GO" id="GO:1902109">
    <property type="term" value="P:negative regulation of mitochondrial membrane permeability involved in apoptotic process"/>
    <property type="evidence" value="ECO:0000266"/>
    <property type="project" value="RGD"/>
</dbReference>
<dbReference type="GO" id="GO:1901029">
    <property type="term" value="P:negative regulation of mitochondrial outer membrane permeabilization involved in apoptotic signaling pathway"/>
    <property type="evidence" value="ECO:0000250"/>
    <property type="project" value="UniProtKB"/>
</dbReference>
<dbReference type="CDD" id="cd00751">
    <property type="entry name" value="thiolase"/>
    <property type="match status" value="1"/>
</dbReference>
<dbReference type="FunFam" id="3.40.47.10:FF:000010">
    <property type="entry name" value="Acetyl-CoA acetyltransferase (Thiolase)"/>
    <property type="match status" value="1"/>
</dbReference>
<dbReference type="Gene3D" id="3.40.47.10">
    <property type="match status" value="2"/>
</dbReference>
<dbReference type="InterPro" id="IPR002155">
    <property type="entry name" value="Thiolase"/>
</dbReference>
<dbReference type="InterPro" id="IPR016039">
    <property type="entry name" value="Thiolase-like"/>
</dbReference>
<dbReference type="InterPro" id="IPR020615">
    <property type="entry name" value="Thiolase_acyl_enz_int_AS"/>
</dbReference>
<dbReference type="InterPro" id="IPR020610">
    <property type="entry name" value="Thiolase_AS"/>
</dbReference>
<dbReference type="InterPro" id="IPR020617">
    <property type="entry name" value="Thiolase_C"/>
</dbReference>
<dbReference type="InterPro" id="IPR020613">
    <property type="entry name" value="Thiolase_CS"/>
</dbReference>
<dbReference type="InterPro" id="IPR020616">
    <property type="entry name" value="Thiolase_N"/>
</dbReference>
<dbReference type="NCBIfam" id="TIGR01930">
    <property type="entry name" value="AcCoA-C-Actrans"/>
    <property type="match status" value="1"/>
</dbReference>
<dbReference type="PANTHER" id="PTHR18919:SF107">
    <property type="entry name" value="ACETYL-COA ACETYLTRANSFERASE, CYTOSOLIC"/>
    <property type="match status" value="1"/>
</dbReference>
<dbReference type="PANTHER" id="PTHR18919">
    <property type="entry name" value="ACETYL-COA C-ACYLTRANSFERASE"/>
    <property type="match status" value="1"/>
</dbReference>
<dbReference type="Pfam" id="PF02803">
    <property type="entry name" value="Thiolase_C"/>
    <property type="match status" value="1"/>
</dbReference>
<dbReference type="Pfam" id="PF00108">
    <property type="entry name" value="Thiolase_N"/>
    <property type="match status" value="1"/>
</dbReference>
<dbReference type="PIRSF" id="PIRSF000429">
    <property type="entry name" value="Ac-CoA_Ac_transf"/>
    <property type="match status" value="1"/>
</dbReference>
<dbReference type="SUPFAM" id="SSF53901">
    <property type="entry name" value="Thiolase-like"/>
    <property type="match status" value="2"/>
</dbReference>
<dbReference type="PROSITE" id="PS00098">
    <property type="entry name" value="THIOLASE_1"/>
    <property type="match status" value="1"/>
</dbReference>
<dbReference type="PROSITE" id="PS00737">
    <property type="entry name" value="THIOLASE_2"/>
    <property type="match status" value="1"/>
</dbReference>
<dbReference type="PROSITE" id="PS00099">
    <property type="entry name" value="THIOLASE_3"/>
    <property type="match status" value="1"/>
</dbReference>
<feature type="chain" id="PRO_0000223301" description="3-ketoacyl-CoA thiolase, mitochondrial">
    <location>
        <begin position="1"/>
        <end position="397"/>
    </location>
</feature>
<feature type="transit peptide" description="Mitochondrion; not cleaved">
    <location>
        <begin position="1"/>
        <end position="16"/>
    </location>
</feature>
<feature type="active site" description="Acyl-thioester intermediate" evidence="1">
    <location>
        <position position="92"/>
    </location>
</feature>
<feature type="active site" description="Proton donor/acceptor" evidence="3">
    <location>
        <position position="382"/>
    </location>
</feature>
<feature type="binding site" evidence="1">
    <location>
        <position position="224"/>
    </location>
    <ligand>
        <name>CoA</name>
        <dbReference type="ChEBI" id="CHEBI:57287"/>
    </ligand>
</feature>
<feature type="binding site" evidence="1">
    <location>
        <position position="227"/>
    </location>
    <ligand>
        <name>CoA</name>
        <dbReference type="ChEBI" id="CHEBI:57287"/>
    </ligand>
</feature>
<feature type="binding site" evidence="1">
    <location>
        <position position="251"/>
    </location>
    <ligand>
        <name>CoA</name>
        <dbReference type="ChEBI" id="CHEBI:57287"/>
    </ligand>
</feature>
<feature type="site" description="Increases nucleophilicity of active site Cys" evidence="1">
    <location>
        <position position="352"/>
    </location>
</feature>
<feature type="modified residue" description="N6-acetyllysine; alternate" evidence="2">
    <location>
        <position position="25"/>
    </location>
</feature>
<feature type="modified residue" description="N6-succinyllysine; alternate" evidence="2">
    <location>
        <position position="25"/>
    </location>
</feature>
<feature type="modified residue" description="N6-succinyllysine" evidence="2">
    <location>
        <position position="45"/>
    </location>
</feature>
<feature type="modified residue" description="Phosphothreonine" evidence="1">
    <location>
        <position position="119"/>
    </location>
</feature>
<feature type="modified residue" description="Phosphoserine" evidence="1">
    <location>
        <position position="121"/>
    </location>
</feature>
<feature type="modified residue" description="Phosphotyrosine" evidence="1">
    <location>
        <position position="127"/>
    </location>
</feature>
<feature type="modified residue" description="Phosphothreonine" evidence="2">
    <location>
        <position position="136"/>
    </location>
</feature>
<feature type="modified residue" description="N6-acetyllysine; alternate" evidence="2">
    <location>
        <position position="137"/>
    </location>
</feature>
<feature type="modified residue" description="N6-succinyllysine; alternate" evidence="2">
    <location>
        <position position="137"/>
    </location>
</feature>
<feature type="modified residue" description="N6-acetyllysine; alternate" evidence="2">
    <location>
        <position position="143"/>
    </location>
</feature>
<feature type="modified residue" description="N6-succinyllysine; alternate" evidence="2">
    <location>
        <position position="143"/>
    </location>
</feature>
<feature type="modified residue" description="N6-acetyllysine; alternate" evidence="2">
    <location>
        <position position="158"/>
    </location>
</feature>
<feature type="modified residue" description="N6-succinyllysine; alternate" evidence="2">
    <location>
        <position position="158"/>
    </location>
</feature>
<feature type="modified residue" description="N6-acetyllysine; alternate" evidence="2">
    <location>
        <position position="171"/>
    </location>
</feature>
<feature type="modified residue" description="N6-succinyllysine; alternate" evidence="2">
    <location>
        <position position="171"/>
    </location>
</feature>
<feature type="modified residue" description="N6-acetyllysine; alternate" evidence="2">
    <location>
        <position position="191"/>
    </location>
</feature>
<feature type="modified residue" description="N6-succinyllysine; alternate" evidence="2">
    <location>
        <position position="191"/>
    </location>
</feature>
<feature type="modified residue" description="N6-acetyllysine; alternate" evidence="2">
    <location>
        <position position="209"/>
    </location>
</feature>
<feature type="modified residue" description="N6-succinyllysine; alternate" evidence="2">
    <location>
        <position position="209"/>
    </location>
</feature>
<feature type="modified residue" description="N6-succinyllysine" evidence="2">
    <location>
        <position position="211"/>
    </location>
</feature>
<feature type="modified residue" description="N6-succinyllysine" evidence="2">
    <location>
        <position position="212"/>
    </location>
</feature>
<feature type="modified residue" description="N6-succinyllysine" evidence="2">
    <location>
        <position position="214"/>
    </location>
</feature>
<feature type="modified residue" description="N6-succinyllysine" evidence="2">
    <location>
        <position position="240"/>
    </location>
</feature>
<feature type="modified residue" description="N6-acetyllysine" evidence="2">
    <location>
        <position position="241"/>
    </location>
</feature>
<feature type="modified residue" description="N6-acetyllysine" evidence="2">
    <location>
        <position position="269"/>
    </location>
</feature>
<feature type="modified residue" description="N6-acetyllysine" evidence="2">
    <location>
        <position position="270"/>
    </location>
</feature>
<feature type="modified residue" description="N6-acetyllysine; alternate" evidence="2">
    <location>
        <position position="305"/>
    </location>
</feature>
<feature type="modified residue" description="N6-succinyllysine; alternate" evidence="2">
    <location>
        <position position="305"/>
    </location>
</feature>
<feature type="modified residue" description="Phosphoserine" evidence="2">
    <location>
        <position position="310"/>
    </location>
</feature>
<feature type="modified residue" description="N6-acetyllysine; alternate" evidence="2">
    <location>
        <position position="312"/>
    </location>
</feature>
<feature type="modified residue" description="N6-succinyllysine; alternate" evidence="2">
    <location>
        <position position="312"/>
    </location>
</feature>
<feature type="modified residue" description="Phosphoserine" evidence="1">
    <location>
        <position position="333"/>
    </location>
</feature>
<feature type="modified residue" description="N6-acetyllysine" evidence="2">
    <location>
        <position position="340"/>
    </location>
</feature>
<feature type="modified residue" description="Phosphoserine" evidence="2">
    <location>
        <position position="344"/>
    </location>
</feature>
<feature type="modified residue" description="N6-acetyllysine" evidence="2">
    <location>
        <position position="375"/>
    </location>
</feature>
<sequence>MALLRGVFIVAAKRTPFGAYGGLLKDFTATDLTEFAARAALSAGKVPPETIDSVIVGNVMQSSSDAAYLARHVGLRVGVPTETGALTLNRLCGSGFQSIVSGCQEICSKDAEVVLCGGTESMSQSPYSVRNVRFGTKFGLDLKLEDTLWAGLTDQHVKLPMGMTAENLAAKYNISREDCDRYALQSQQRWKAANEAGYFNEEMAPIEVKTKKGKQTMQVDEHARPQTTLEQLQNLPPVFKKEGTVTAGNASGMSDGAGVVIIASEDAVKKHNFTPLARVVGYFVSGCDPAIMGIGPVPAITGALKKAGLSLKDMDLIDVNEAFAPQFLAVQKSLDLDPSKTNVSGGAIALGHPLGGSGSRITAHLVHELRRRGGKYAVGSACIGGGQGISLIIQNTA</sequence>
<gene>
    <name type="primary">Acaa2</name>
</gene>
<organism>
    <name type="scientific">Rattus norvegicus</name>
    <name type="common">Rat</name>
    <dbReference type="NCBI Taxonomy" id="10116"/>
    <lineage>
        <taxon>Eukaryota</taxon>
        <taxon>Metazoa</taxon>
        <taxon>Chordata</taxon>
        <taxon>Craniata</taxon>
        <taxon>Vertebrata</taxon>
        <taxon>Euteleostomi</taxon>
        <taxon>Mammalia</taxon>
        <taxon>Eutheria</taxon>
        <taxon>Euarchontoglires</taxon>
        <taxon>Glires</taxon>
        <taxon>Rodentia</taxon>
        <taxon>Myomorpha</taxon>
        <taxon>Muroidea</taxon>
        <taxon>Muridae</taxon>
        <taxon>Murinae</taxon>
        <taxon>Rattus</taxon>
    </lineage>
</organism>
<keyword id="KW-0007">Acetylation</keyword>
<keyword id="KW-0012">Acyltransferase</keyword>
<keyword id="KW-0276">Fatty acid metabolism</keyword>
<keyword id="KW-0378">Hydrolase</keyword>
<keyword id="KW-0443">Lipid metabolism</keyword>
<keyword id="KW-0496">Mitochondrion</keyword>
<keyword id="KW-0597">Phosphoprotein</keyword>
<keyword id="KW-1185">Reference proteome</keyword>
<keyword id="KW-0808">Transferase</keyword>
<keyword id="KW-0809">Transit peptide</keyword>
<comment type="function">
    <text evidence="1 4 6">In the production of energy from fats, this is one of the enzymes that catalyzes the last step of the mitochondrial beta-oxidation pathway, an aerobic process breaking down fatty acids into acetyl-CoA (Probable). Using free coenzyme A/CoA, catalyzes the thiolytic cleavage of medium- to long-chain unbranched 3-oxoacyl-CoAs into acetyl-CoA and a fatty acyl-CoA shortened by two carbon atoms (Probable). Also catalyzes the condensation of two acetyl-CoA molecules into acetoacetyl-CoA and could be involved in the production of ketone bodies (Probable). Also displays hydrolase activity on various fatty acyl-CoAs (PubMed:16476568). Thereby, could be responsible for the production of acetate in a side reaction to beta-oxidation (Probable). Abolishes BNIP3-mediated apoptosis and mitochondrial damage (By similarity).</text>
</comment>
<comment type="catalytic activity">
    <reaction evidence="4">
        <text>an acyl-CoA + acetyl-CoA = a 3-oxoacyl-CoA + CoA</text>
        <dbReference type="Rhea" id="RHEA:21564"/>
        <dbReference type="ChEBI" id="CHEBI:57287"/>
        <dbReference type="ChEBI" id="CHEBI:57288"/>
        <dbReference type="ChEBI" id="CHEBI:58342"/>
        <dbReference type="ChEBI" id="CHEBI:90726"/>
        <dbReference type="EC" id="2.3.1.16"/>
    </reaction>
    <physiologicalReaction direction="left-to-right" evidence="6">
        <dbReference type="Rhea" id="RHEA:21565"/>
    </physiologicalReaction>
    <physiologicalReaction direction="right-to-left" evidence="6">
        <dbReference type="Rhea" id="RHEA:21566"/>
    </physiologicalReaction>
</comment>
<comment type="catalytic activity">
    <reaction evidence="4">
        <text>2 acetyl-CoA = acetoacetyl-CoA + CoA</text>
        <dbReference type="Rhea" id="RHEA:21036"/>
        <dbReference type="ChEBI" id="CHEBI:57286"/>
        <dbReference type="ChEBI" id="CHEBI:57287"/>
        <dbReference type="ChEBI" id="CHEBI:57288"/>
        <dbReference type="EC" id="2.3.1.9"/>
    </reaction>
    <physiologicalReaction direction="left-to-right" evidence="6">
        <dbReference type="Rhea" id="RHEA:21037"/>
    </physiologicalReaction>
    <physiologicalReaction direction="right-to-left" evidence="6">
        <dbReference type="Rhea" id="RHEA:21038"/>
    </physiologicalReaction>
</comment>
<comment type="catalytic activity">
    <reaction evidence="4">
        <text>acetyl-CoA + H2O = acetate + CoA + H(+)</text>
        <dbReference type="Rhea" id="RHEA:20289"/>
        <dbReference type="ChEBI" id="CHEBI:15377"/>
        <dbReference type="ChEBI" id="CHEBI:15378"/>
        <dbReference type="ChEBI" id="CHEBI:30089"/>
        <dbReference type="ChEBI" id="CHEBI:57287"/>
        <dbReference type="ChEBI" id="CHEBI:57288"/>
        <dbReference type="EC" id="3.1.2.1"/>
    </reaction>
    <physiologicalReaction direction="left-to-right" evidence="6">
        <dbReference type="Rhea" id="RHEA:20290"/>
    </physiologicalReaction>
</comment>
<comment type="catalytic activity">
    <reaction evidence="4">
        <text>propanoyl-CoA + H2O = propanoate + CoA + H(+)</text>
        <dbReference type="Rhea" id="RHEA:40103"/>
        <dbReference type="ChEBI" id="CHEBI:15377"/>
        <dbReference type="ChEBI" id="CHEBI:15378"/>
        <dbReference type="ChEBI" id="CHEBI:17272"/>
        <dbReference type="ChEBI" id="CHEBI:57287"/>
        <dbReference type="ChEBI" id="CHEBI:57392"/>
    </reaction>
    <physiologicalReaction direction="left-to-right" evidence="6">
        <dbReference type="Rhea" id="RHEA:40104"/>
    </physiologicalReaction>
</comment>
<comment type="catalytic activity">
    <reaction evidence="4">
        <text>butanoyl-CoA + H2O = butanoate + CoA + H(+)</text>
        <dbReference type="Rhea" id="RHEA:40111"/>
        <dbReference type="ChEBI" id="CHEBI:15377"/>
        <dbReference type="ChEBI" id="CHEBI:15378"/>
        <dbReference type="ChEBI" id="CHEBI:17968"/>
        <dbReference type="ChEBI" id="CHEBI:57287"/>
        <dbReference type="ChEBI" id="CHEBI:57371"/>
    </reaction>
    <physiologicalReaction direction="left-to-right" evidence="6">
        <dbReference type="Rhea" id="RHEA:40112"/>
    </physiologicalReaction>
</comment>
<comment type="catalytic activity">
    <reaction evidence="4">
        <text>hexanoyl-CoA + H2O = hexanoate + CoA + H(+)</text>
        <dbReference type="Rhea" id="RHEA:40115"/>
        <dbReference type="ChEBI" id="CHEBI:15377"/>
        <dbReference type="ChEBI" id="CHEBI:15378"/>
        <dbReference type="ChEBI" id="CHEBI:17120"/>
        <dbReference type="ChEBI" id="CHEBI:57287"/>
        <dbReference type="ChEBI" id="CHEBI:62620"/>
    </reaction>
    <physiologicalReaction direction="left-to-right" evidence="6">
        <dbReference type="Rhea" id="RHEA:40116"/>
    </physiologicalReaction>
</comment>
<comment type="catalytic activity">
    <reaction evidence="1">
        <text>octanoyl-CoA + H2O = octanoate + CoA + H(+)</text>
        <dbReference type="Rhea" id="RHEA:30143"/>
        <dbReference type="ChEBI" id="CHEBI:15377"/>
        <dbReference type="ChEBI" id="CHEBI:15378"/>
        <dbReference type="ChEBI" id="CHEBI:25646"/>
        <dbReference type="ChEBI" id="CHEBI:57287"/>
        <dbReference type="ChEBI" id="CHEBI:57386"/>
    </reaction>
    <physiologicalReaction direction="left-to-right" evidence="1">
        <dbReference type="Rhea" id="RHEA:30144"/>
    </physiologicalReaction>
</comment>
<comment type="catalytic activity">
    <reaction evidence="1">
        <text>decanoyl-CoA + H2O = decanoate + CoA + H(+)</text>
        <dbReference type="Rhea" id="RHEA:40059"/>
        <dbReference type="ChEBI" id="CHEBI:15377"/>
        <dbReference type="ChEBI" id="CHEBI:15378"/>
        <dbReference type="ChEBI" id="CHEBI:27689"/>
        <dbReference type="ChEBI" id="CHEBI:57287"/>
        <dbReference type="ChEBI" id="CHEBI:61430"/>
    </reaction>
    <physiologicalReaction direction="left-to-right" evidence="1">
        <dbReference type="Rhea" id="RHEA:40060"/>
    </physiologicalReaction>
</comment>
<comment type="catalytic activity">
    <reaction evidence="4">
        <text>dodecanoyl-CoA + H2O = dodecanoate + CoA + H(+)</text>
        <dbReference type="Rhea" id="RHEA:30135"/>
        <dbReference type="ChEBI" id="CHEBI:15377"/>
        <dbReference type="ChEBI" id="CHEBI:15378"/>
        <dbReference type="ChEBI" id="CHEBI:18262"/>
        <dbReference type="ChEBI" id="CHEBI:57287"/>
        <dbReference type="ChEBI" id="CHEBI:57375"/>
    </reaction>
    <physiologicalReaction direction="left-to-right" evidence="6">
        <dbReference type="Rhea" id="RHEA:30136"/>
    </physiologicalReaction>
</comment>
<comment type="catalytic activity">
    <reaction evidence="1">
        <text>tetradecanoyl-CoA + H2O = tetradecanoate + CoA + H(+)</text>
        <dbReference type="Rhea" id="RHEA:40119"/>
        <dbReference type="ChEBI" id="CHEBI:15377"/>
        <dbReference type="ChEBI" id="CHEBI:15378"/>
        <dbReference type="ChEBI" id="CHEBI:30807"/>
        <dbReference type="ChEBI" id="CHEBI:57287"/>
        <dbReference type="ChEBI" id="CHEBI:57385"/>
    </reaction>
    <physiologicalReaction direction="left-to-right" evidence="1">
        <dbReference type="Rhea" id="RHEA:40120"/>
    </physiologicalReaction>
</comment>
<comment type="catalytic activity">
    <reaction evidence="4">
        <text>hexadecanoyl-CoA + H2O = hexadecanoate + CoA + H(+)</text>
        <dbReference type="Rhea" id="RHEA:16645"/>
        <dbReference type="ChEBI" id="CHEBI:7896"/>
        <dbReference type="ChEBI" id="CHEBI:15377"/>
        <dbReference type="ChEBI" id="CHEBI:15378"/>
        <dbReference type="ChEBI" id="CHEBI:57287"/>
        <dbReference type="ChEBI" id="CHEBI:57379"/>
        <dbReference type="EC" id="3.1.2.2"/>
    </reaction>
    <physiologicalReaction direction="left-to-right" evidence="6">
        <dbReference type="Rhea" id="RHEA:16646"/>
    </physiologicalReaction>
</comment>
<comment type="activity regulation">
    <text evidence="4">The 3-oxoacetyl-CoA thiolase activity is inhibited by acetyl-CoA while the acetyl-CoA hydrolase activity is inhibited by acetoacetyl-CoA.</text>
</comment>
<comment type="biophysicochemical properties">
    <kinetics>
        <KM evidence="4">11.4 uM for acetoacetyl-CoA</KM>
        <KM evidence="4">0.71 mM for acetyl-CoA</KM>
    </kinetics>
</comment>
<comment type="pathway">
    <text evidence="4">Lipid metabolism; fatty acid beta-oxidation.</text>
</comment>
<comment type="subunit">
    <text evidence="1">Homotetramer. Interacts with BNIP3 (By similarity).</text>
</comment>
<comment type="subcellular location">
    <subcellularLocation>
        <location evidence="4">Mitochondrion</location>
    </subcellularLocation>
</comment>
<comment type="tissue specificity">
    <text evidence="4">Expressed in liver, brown adipose tissue and heart (at protein level).</text>
</comment>
<comment type="induction">
    <text evidence="4">Up-regulated in liver, brown adipose tissue, heart, intestine and kidney by DEHP/bis(2-ethylhexyl)phthalate (at protein level).</text>
</comment>
<comment type="similarity">
    <text evidence="5">Belongs to the thiolase-like superfamily. Thiolase family.</text>
</comment>
<protein>
    <recommendedName>
        <fullName evidence="5">3-ketoacyl-CoA thiolase, mitochondrial</fullName>
        <ecNumber evidence="4">2.3.1.16</ecNumber>
    </recommendedName>
    <alternativeName>
        <fullName evidence="5">Acetyl-CoA acetyltransferase</fullName>
        <ecNumber evidence="4">2.3.1.9</ecNumber>
    </alternativeName>
    <alternativeName>
        <fullName>Acetyl-CoA acyltransferase</fullName>
    </alternativeName>
    <alternativeName>
        <fullName evidence="5">Acyl-CoA hydrolase, mitochondrial</fullName>
        <ecNumber evidence="4">3.1.2.-</ecNumber>
        <ecNumber evidence="4">3.1.2.1</ecNumber>
        <ecNumber evidence="4">3.1.2.2</ecNumber>
    </alternativeName>
    <alternativeName>
        <fullName>Beta-ketothiolase</fullName>
    </alternativeName>
    <alternativeName>
        <fullName>Mitochondrial 3-oxoacyl-CoA thiolase</fullName>
    </alternativeName>
</protein>
<accession>P13437</accession>
<reference key="1">
    <citation type="journal article" date="1987" name="EMBO J.">
        <title>cDNA-derived amino acid sequence of rat mitochondrial 3-oxoacyl-CoA thiolase with no transient presequence: structural relationship with peroxisomal isozyme.</title>
        <authorList>
            <person name="Arakawa H."/>
            <person name="Takiguchi M."/>
            <person name="Amaya Y."/>
            <person name="Nagata S."/>
            <person name="Hayashi H."/>
            <person name="Mori M."/>
        </authorList>
    </citation>
    <scope>NUCLEOTIDE SEQUENCE [MRNA]</scope>
    <source>
        <tissue>Liver</tissue>
    </source>
</reference>
<reference key="2">
    <citation type="journal article" date="2006" name="Biochim. Biophys. Acta">
        <title>Acetate generation in rat liver mitochondria; acetyl-CoA hydrolase activity is demonstrated by 3-ketoacyl-CoA thiolase.</title>
        <authorList>
            <person name="Yamashita H."/>
            <person name="Itsuki A."/>
            <person name="Kimoto M."/>
            <person name="Hiemori M."/>
            <person name="Tsuji H."/>
        </authorList>
    </citation>
    <scope>FUNCTION</scope>
    <scope>CATALYTIC ACTIVITY</scope>
    <scope>PATHWAY</scope>
    <scope>BIOPHYSICOCHEMICAL PROPERTIES</scope>
    <scope>ACTIVITY REGULATION</scope>
    <scope>SUBCELLULAR LOCATION</scope>
    <scope>TISSUE SPECIFICITY</scope>
    <scope>INDUCTION BY DEHP</scope>
</reference>
<name>THIM_RAT</name>